<name>EFTS_LEIBR</name>
<accession>A4HH79</accession>
<proteinExistence type="inferred from homology"/>
<organism>
    <name type="scientific">Leishmania braziliensis</name>
    <dbReference type="NCBI Taxonomy" id="5660"/>
    <lineage>
        <taxon>Eukaryota</taxon>
        <taxon>Discoba</taxon>
        <taxon>Euglenozoa</taxon>
        <taxon>Kinetoplastea</taxon>
        <taxon>Metakinetoplastina</taxon>
        <taxon>Trypanosomatida</taxon>
        <taxon>Trypanosomatidae</taxon>
        <taxon>Leishmaniinae</taxon>
        <taxon>Leishmania</taxon>
        <taxon>Leishmania braziliensis species complex</taxon>
    </lineage>
</organism>
<keyword id="KW-0251">Elongation factor</keyword>
<keyword id="KW-0496">Mitochondrion</keyword>
<keyword id="KW-0648">Protein biosynthesis</keyword>
<keyword id="KW-1185">Reference proteome</keyword>
<comment type="function">
    <text evidence="1">Associates with the EF-Tu.GDP complex and induces the exchange of GDP to GTP. It remains bound to the aminoacyl-tRNA.EF-Tu.GTP complex up to the GTP hydrolysis stage on the ribosome.</text>
</comment>
<comment type="subcellular location">
    <subcellularLocation>
        <location evidence="1">Mitochondrion</location>
    </subcellularLocation>
</comment>
<comment type="miscellaneous">
    <text evidence="1">This protein may be expected to contain an N-terminal transit peptide but none has been predicted.</text>
</comment>
<comment type="similarity">
    <text evidence="1">Belongs to the EF-Ts family.</text>
</comment>
<gene>
    <name type="ORF">LbrM29_V2.0730</name>
    <name type="ORF">LbrM_29_0730</name>
</gene>
<protein>
    <recommendedName>
        <fullName evidence="1">Elongation factor Ts, mitochondrial</fullName>
        <shortName evidence="1">EF-Ts</shortName>
        <shortName evidence="1">EF-TsMt</shortName>
    </recommendedName>
</protein>
<dbReference type="EMBL" id="FR799004">
    <property type="protein sequence ID" value="CAM39929.1"/>
    <property type="molecule type" value="Genomic_DNA"/>
</dbReference>
<dbReference type="RefSeq" id="XP_001566420.1">
    <property type="nucleotide sequence ID" value="XM_001566370.1"/>
</dbReference>
<dbReference type="SMR" id="A4HH79"/>
<dbReference type="STRING" id="5660.A4HH79"/>
<dbReference type="GeneID" id="5417305"/>
<dbReference type="KEGG" id="lbz:LBRM_29_0730"/>
<dbReference type="VEuPathDB" id="TriTrypDB:LbrM.29.0730"/>
<dbReference type="InParanoid" id="A4HH79"/>
<dbReference type="OMA" id="APHMSER"/>
<dbReference type="Proteomes" id="UP000007258">
    <property type="component" value="Chromosome 29"/>
</dbReference>
<dbReference type="GO" id="GO:0005739">
    <property type="term" value="C:mitochondrion"/>
    <property type="evidence" value="ECO:0007669"/>
    <property type="project" value="UniProtKB-SubCell"/>
</dbReference>
<dbReference type="GO" id="GO:0003746">
    <property type="term" value="F:translation elongation factor activity"/>
    <property type="evidence" value="ECO:0007669"/>
    <property type="project" value="UniProtKB-UniRule"/>
</dbReference>
<dbReference type="GO" id="GO:0070125">
    <property type="term" value="P:mitochondrial translational elongation"/>
    <property type="evidence" value="ECO:0007669"/>
    <property type="project" value="TreeGrafter"/>
</dbReference>
<dbReference type="CDD" id="cd14275">
    <property type="entry name" value="UBA_EF-Ts"/>
    <property type="match status" value="1"/>
</dbReference>
<dbReference type="FunFam" id="1.10.8.10:FF:000001">
    <property type="entry name" value="Elongation factor Ts"/>
    <property type="match status" value="1"/>
</dbReference>
<dbReference type="FunFam" id="3.30.479.20:FF:000033">
    <property type="entry name" value="Elongation factor Ts, mitochondrial"/>
    <property type="match status" value="1"/>
</dbReference>
<dbReference type="Gene3D" id="1.10.8.10">
    <property type="entry name" value="DNA helicase RuvA subunit, C-terminal domain"/>
    <property type="match status" value="1"/>
</dbReference>
<dbReference type="Gene3D" id="3.30.479.20">
    <property type="entry name" value="Elongation factor Ts, dimerisation domain"/>
    <property type="match status" value="1"/>
</dbReference>
<dbReference type="HAMAP" id="MF_00050">
    <property type="entry name" value="EF_Ts"/>
    <property type="match status" value="1"/>
</dbReference>
<dbReference type="InterPro" id="IPR036402">
    <property type="entry name" value="EF-Ts_dimer_sf"/>
</dbReference>
<dbReference type="InterPro" id="IPR001816">
    <property type="entry name" value="Transl_elong_EFTs/EF1B"/>
</dbReference>
<dbReference type="InterPro" id="IPR014039">
    <property type="entry name" value="Transl_elong_EFTs/EF1B_dimer"/>
</dbReference>
<dbReference type="InterPro" id="IPR009060">
    <property type="entry name" value="UBA-like_sf"/>
</dbReference>
<dbReference type="PANTHER" id="PTHR11741">
    <property type="entry name" value="ELONGATION FACTOR TS"/>
    <property type="match status" value="1"/>
</dbReference>
<dbReference type="PANTHER" id="PTHR11741:SF0">
    <property type="entry name" value="ELONGATION FACTOR TS, MITOCHONDRIAL"/>
    <property type="match status" value="1"/>
</dbReference>
<dbReference type="Pfam" id="PF00889">
    <property type="entry name" value="EF_TS"/>
    <property type="match status" value="1"/>
</dbReference>
<dbReference type="SUPFAM" id="SSF54713">
    <property type="entry name" value="Elongation factor Ts (EF-Ts), dimerisation domain"/>
    <property type="match status" value="1"/>
</dbReference>
<dbReference type="SUPFAM" id="SSF46934">
    <property type="entry name" value="UBA-like"/>
    <property type="match status" value="1"/>
</dbReference>
<feature type="chain" id="PRO_0000402336" description="Elongation factor Ts, mitochondrial">
    <location>
        <begin position="1"/>
        <end position="276"/>
    </location>
</feature>
<sequence>MLHRSFFRFAALADKKAFMELVKALRYRTEAPISDCSAALTEAAGDMDAAMQLLRKRGVARAMKKGDCVTEHGFVVSCVGSTPASGAAIITMCSETDFAARNEHFQRTCVQARDQLRKLMDATNGAVLANPEEAAKQLSDIMGEELRAAIAVLGENMRIRSIAPLVPAPHMSERLLVGSYTHGVLNVDGVGRIVGLVAVSQVRENEVISKDVLTSIGRHFVATSGAEGNYAHQNFFGSETETVGKWLKHHGLTFSSSLVQEFGKEPVVHTAAEPHQ</sequence>
<reference key="1">
    <citation type="journal article" date="2007" name="Nat. Genet.">
        <title>Comparative genomic analysis of three Leishmania species that cause diverse human disease.</title>
        <authorList>
            <person name="Peacock C.S."/>
            <person name="Seeger K."/>
            <person name="Harris D."/>
            <person name="Murphy L."/>
            <person name="Ruiz J.C."/>
            <person name="Quail M.A."/>
            <person name="Peters N."/>
            <person name="Adlem E."/>
            <person name="Tivey A."/>
            <person name="Aslett M."/>
            <person name="Kerhornou A."/>
            <person name="Ivens A."/>
            <person name="Fraser A."/>
            <person name="Rajandream M.-A."/>
            <person name="Carver T."/>
            <person name="Norbertczak H."/>
            <person name="Chillingworth T."/>
            <person name="Hance Z."/>
            <person name="Jagels K."/>
            <person name="Moule S."/>
            <person name="Ormond D."/>
            <person name="Rutter S."/>
            <person name="Sqaures R."/>
            <person name="Whitehead S."/>
            <person name="Rabbinowitsch E."/>
            <person name="Arrowsmith C."/>
            <person name="White B."/>
            <person name="Thurston S."/>
            <person name="Bringaud F."/>
            <person name="Baldauf S.L."/>
            <person name="Faulconbridge A."/>
            <person name="Jeffares D."/>
            <person name="Depledge D.P."/>
            <person name="Oyola S.O."/>
            <person name="Hilley J.D."/>
            <person name="Brito L.O."/>
            <person name="Tosi L.R.O."/>
            <person name="Barrell B."/>
            <person name="Cruz A.K."/>
            <person name="Mottram J.C."/>
            <person name="Smith D.F."/>
            <person name="Berriman M."/>
        </authorList>
    </citation>
    <scope>NUCLEOTIDE SEQUENCE [LARGE SCALE GENOMIC DNA]</scope>
    <source>
        <strain>MHOM/BR/75/M2904</strain>
    </source>
</reference>
<evidence type="ECO:0000255" key="1">
    <source>
        <dbReference type="HAMAP-Rule" id="MF_03135"/>
    </source>
</evidence>